<gene>
    <name type="primary">hssR</name>
    <name type="ordered locus">SACOL2358</name>
</gene>
<evidence type="ECO:0000250" key="1"/>
<evidence type="ECO:0000255" key="2">
    <source>
        <dbReference type="PROSITE-ProRule" id="PRU00169"/>
    </source>
</evidence>
<evidence type="ECO:0000255" key="3">
    <source>
        <dbReference type="PROSITE-ProRule" id="PRU01091"/>
    </source>
</evidence>
<evidence type="ECO:0000305" key="4"/>
<reference key="1">
    <citation type="journal article" date="2005" name="J. Bacteriol.">
        <title>Insights on evolution of virulence and resistance from the complete genome analysis of an early methicillin-resistant Staphylococcus aureus strain and a biofilm-producing methicillin-resistant Staphylococcus epidermidis strain.</title>
        <authorList>
            <person name="Gill S.R."/>
            <person name="Fouts D.E."/>
            <person name="Archer G.L."/>
            <person name="Mongodin E.F."/>
            <person name="DeBoy R.T."/>
            <person name="Ravel J."/>
            <person name="Paulsen I.T."/>
            <person name="Kolonay J.F."/>
            <person name="Brinkac L.M."/>
            <person name="Beanan M.J."/>
            <person name="Dodson R.J."/>
            <person name="Daugherty S.C."/>
            <person name="Madupu R."/>
            <person name="Angiuoli S.V."/>
            <person name="Durkin A.S."/>
            <person name="Haft D.H."/>
            <person name="Vamathevan J.J."/>
            <person name="Khouri H."/>
            <person name="Utterback T.R."/>
            <person name="Lee C."/>
            <person name="Dimitrov G."/>
            <person name="Jiang L."/>
            <person name="Qin H."/>
            <person name="Weidman J."/>
            <person name="Tran K."/>
            <person name="Kang K.H."/>
            <person name="Hance I.R."/>
            <person name="Nelson K.E."/>
            <person name="Fraser C.M."/>
        </authorList>
    </citation>
    <scope>NUCLEOTIDE SEQUENCE [LARGE SCALE GENOMIC DNA]</scope>
    <source>
        <strain>COL</strain>
    </source>
</reference>
<name>HSSR_STAAC</name>
<sequence>MVQCLVVDDDPRILNYIASHLQIEHIDAYTQPSGEAALKLLEKQRVDIAVVDIMMDGMDGFQLCNTLKNDYDIPVIMLTARDALSDKERAFISGTDDYVTKPFEVKELIFRIRAVLRRYNINSNSEMTIGNLTLNQSYLELQVSNKTMTLPNKEFQLLFMLAARPKQIFTREQIIEKIWGYDYEGDERTVDVHIKRLRQRLKKLNATLTIETVRGQGYKVENHV</sequence>
<comment type="function">
    <text evidence="1">Member of the two-component regulatory system HssS/HssR involved in intracellular heme homeostasis and tempering of staphylococcal virulence. Phosphorylated HssR binds to a direct repeat sequence within hrtAB promoter and activates the expression of hrtAB, an efflux pump, in response to extracellular heme, hemin, hemoglobin or blood (By similarity).</text>
</comment>
<comment type="subcellular location">
    <subcellularLocation>
        <location evidence="4">Cytoplasm</location>
    </subcellularLocation>
</comment>
<comment type="PTM">
    <text evidence="1">Phosphorylated by HssS.</text>
</comment>
<keyword id="KW-0010">Activator</keyword>
<keyword id="KW-0963">Cytoplasm</keyword>
<keyword id="KW-0238">DNA-binding</keyword>
<keyword id="KW-0597">Phosphoprotein</keyword>
<keyword id="KW-0804">Transcription</keyword>
<keyword id="KW-0805">Transcription regulation</keyword>
<keyword id="KW-0902">Two-component regulatory system</keyword>
<keyword id="KW-0843">Virulence</keyword>
<feature type="chain" id="PRO_0000331320" description="Heme response regulator HssR">
    <location>
        <begin position="1"/>
        <end position="224"/>
    </location>
</feature>
<feature type="domain" description="Response regulatory" evidence="2">
    <location>
        <begin position="3"/>
        <end position="116"/>
    </location>
</feature>
<feature type="DNA-binding region" description="OmpR/PhoB-type" evidence="3">
    <location>
        <begin position="124"/>
        <end position="222"/>
    </location>
</feature>
<feature type="modified residue" description="4-aspartylphosphate" evidence="2">
    <location>
        <position position="52"/>
    </location>
</feature>
<protein>
    <recommendedName>
        <fullName>Heme response regulator HssR</fullName>
    </recommendedName>
</protein>
<accession>Q5HDJ4</accession>
<proteinExistence type="inferred from homology"/>
<organism>
    <name type="scientific">Staphylococcus aureus (strain COL)</name>
    <dbReference type="NCBI Taxonomy" id="93062"/>
    <lineage>
        <taxon>Bacteria</taxon>
        <taxon>Bacillati</taxon>
        <taxon>Bacillota</taxon>
        <taxon>Bacilli</taxon>
        <taxon>Bacillales</taxon>
        <taxon>Staphylococcaceae</taxon>
        <taxon>Staphylococcus</taxon>
    </lineage>
</organism>
<dbReference type="EMBL" id="CP000046">
    <property type="protein sequence ID" value="AAW37185.1"/>
    <property type="molecule type" value="Genomic_DNA"/>
</dbReference>
<dbReference type="RefSeq" id="WP_000249491.1">
    <property type="nucleotide sequence ID" value="NZ_JBGOFO010000004.1"/>
</dbReference>
<dbReference type="SMR" id="Q5HDJ4"/>
<dbReference type="KEGG" id="sac:SACOL2358"/>
<dbReference type="HOGENOM" id="CLU_000445_30_3_9"/>
<dbReference type="Proteomes" id="UP000000530">
    <property type="component" value="Chromosome"/>
</dbReference>
<dbReference type="GO" id="GO:0005829">
    <property type="term" value="C:cytosol"/>
    <property type="evidence" value="ECO:0007669"/>
    <property type="project" value="TreeGrafter"/>
</dbReference>
<dbReference type="GO" id="GO:0032993">
    <property type="term" value="C:protein-DNA complex"/>
    <property type="evidence" value="ECO:0007669"/>
    <property type="project" value="TreeGrafter"/>
</dbReference>
<dbReference type="GO" id="GO:0000156">
    <property type="term" value="F:phosphorelay response regulator activity"/>
    <property type="evidence" value="ECO:0007669"/>
    <property type="project" value="TreeGrafter"/>
</dbReference>
<dbReference type="GO" id="GO:0000976">
    <property type="term" value="F:transcription cis-regulatory region binding"/>
    <property type="evidence" value="ECO:0007669"/>
    <property type="project" value="TreeGrafter"/>
</dbReference>
<dbReference type="GO" id="GO:0006355">
    <property type="term" value="P:regulation of DNA-templated transcription"/>
    <property type="evidence" value="ECO:0007669"/>
    <property type="project" value="InterPro"/>
</dbReference>
<dbReference type="CDD" id="cd17574">
    <property type="entry name" value="REC_OmpR"/>
    <property type="match status" value="1"/>
</dbReference>
<dbReference type="CDD" id="cd00383">
    <property type="entry name" value="trans_reg_C"/>
    <property type="match status" value="1"/>
</dbReference>
<dbReference type="FunFam" id="1.10.10.10:FF:000018">
    <property type="entry name" value="DNA-binding response regulator ResD"/>
    <property type="match status" value="1"/>
</dbReference>
<dbReference type="Gene3D" id="3.40.50.2300">
    <property type="match status" value="1"/>
</dbReference>
<dbReference type="Gene3D" id="6.10.250.690">
    <property type="match status" value="1"/>
</dbReference>
<dbReference type="Gene3D" id="1.10.10.10">
    <property type="entry name" value="Winged helix-like DNA-binding domain superfamily/Winged helix DNA-binding domain"/>
    <property type="match status" value="1"/>
</dbReference>
<dbReference type="InterPro" id="IPR011006">
    <property type="entry name" value="CheY-like_superfamily"/>
</dbReference>
<dbReference type="InterPro" id="IPR001867">
    <property type="entry name" value="OmpR/PhoB-type_DNA-bd"/>
</dbReference>
<dbReference type="InterPro" id="IPR001789">
    <property type="entry name" value="Sig_transdc_resp-reg_receiver"/>
</dbReference>
<dbReference type="InterPro" id="IPR039420">
    <property type="entry name" value="WalR-like"/>
</dbReference>
<dbReference type="InterPro" id="IPR036388">
    <property type="entry name" value="WH-like_DNA-bd_sf"/>
</dbReference>
<dbReference type="PANTHER" id="PTHR48111:SF49">
    <property type="entry name" value="HEME RESPONSE REGULATOR HSSR"/>
    <property type="match status" value="1"/>
</dbReference>
<dbReference type="PANTHER" id="PTHR48111">
    <property type="entry name" value="REGULATOR OF RPOS"/>
    <property type="match status" value="1"/>
</dbReference>
<dbReference type="Pfam" id="PF00072">
    <property type="entry name" value="Response_reg"/>
    <property type="match status" value="1"/>
</dbReference>
<dbReference type="Pfam" id="PF00486">
    <property type="entry name" value="Trans_reg_C"/>
    <property type="match status" value="1"/>
</dbReference>
<dbReference type="SMART" id="SM00448">
    <property type="entry name" value="REC"/>
    <property type="match status" value="1"/>
</dbReference>
<dbReference type="SMART" id="SM00862">
    <property type="entry name" value="Trans_reg_C"/>
    <property type="match status" value="1"/>
</dbReference>
<dbReference type="SUPFAM" id="SSF52172">
    <property type="entry name" value="CheY-like"/>
    <property type="match status" value="1"/>
</dbReference>
<dbReference type="PROSITE" id="PS51755">
    <property type="entry name" value="OMPR_PHOB"/>
    <property type="match status" value="1"/>
</dbReference>
<dbReference type="PROSITE" id="PS50110">
    <property type="entry name" value="RESPONSE_REGULATORY"/>
    <property type="match status" value="1"/>
</dbReference>